<comment type="function">
    <text>Component of the polyhedra envelope.</text>
</comment>
<comment type="subcellular location">
    <subcellularLocation>
        <location>Virion membrane</location>
    </subcellularLocation>
    <subcellularLocation>
        <location>Host nucleus</location>
    </subcellularLocation>
    <text>Associated with the envelopes of virions present in the nucleus of infected cells, with the envelopes of virions in the process of being occluded and fully occluded virions.</text>
</comment>
<comment type="developmental stage">
    <text>First appears after 18 hours of infection.</text>
</comment>
<comment type="similarity">
    <text evidence="1">Belongs to the baculoviridae p25 family.</text>
</comment>
<accession>Q06906</accession>
<proteinExistence type="evidence at transcript level"/>
<organismHost>
    <name type="scientific">Orgyia pseudotsugata</name>
    <name type="common">Douglas-fir tussock moth</name>
    <dbReference type="NCBI Taxonomy" id="33414"/>
</organismHost>
<feature type="chain" id="PRO_0000132893" description="Occlusion-derived virus envelope protein E25">
    <location>
        <begin position="1"/>
        <end position="229"/>
    </location>
</feature>
<dbReference type="EMBL" id="D13768">
    <property type="protein sequence ID" value="BAA02913.1"/>
    <property type="molecule type" value="Genomic_DNA"/>
</dbReference>
<dbReference type="EMBL" id="U75930">
    <property type="protein sequence ID" value="AAC59094.1"/>
    <property type="molecule type" value="Genomic_DNA"/>
</dbReference>
<dbReference type="RefSeq" id="NP_046251.1">
    <property type="nucleotide sequence ID" value="NC_001875.2"/>
</dbReference>
<dbReference type="KEGG" id="vg:912067"/>
<dbReference type="OrthoDB" id="10196at10239"/>
<dbReference type="Proteomes" id="UP000009248">
    <property type="component" value="Genome"/>
</dbReference>
<dbReference type="GO" id="GO:0042025">
    <property type="term" value="C:host cell nucleus"/>
    <property type="evidence" value="ECO:0007669"/>
    <property type="project" value="UniProtKB-SubCell"/>
</dbReference>
<dbReference type="GO" id="GO:0016020">
    <property type="term" value="C:membrane"/>
    <property type="evidence" value="ECO:0007669"/>
    <property type="project" value="UniProtKB-KW"/>
</dbReference>
<dbReference type="GO" id="GO:0019031">
    <property type="term" value="C:viral envelope"/>
    <property type="evidence" value="ECO:0007669"/>
    <property type="project" value="InterPro"/>
</dbReference>
<dbReference type="GO" id="GO:0055036">
    <property type="term" value="C:virion membrane"/>
    <property type="evidence" value="ECO:0007669"/>
    <property type="project" value="UniProtKB-SubCell"/>
</dbReference>
<dbReference type="InterPro" id="IPR007938">
    <property type="entry name" value="Baculo_ODV-E25"/>
</dbReference>
<dbReference type="Pfam" id="PF05274">
    <property type="entry name" value="Baculo_E25"/>
    <property type="match status" value="1"/>
</dbReference>
<sequence>MWGALILLILLVFLFYLWYNGKLNLNSLTESSPSLAQSSDSVQVDPQTEQLNVKLGNNKMTYMRVAHGDNKVSQVYVAEKPMSMDDIEKQGNARVGANSLFIGTVYDQGVRSPNAPGASNDVTVTRTTANFDVKEYKNMFIVVKGLPPAKMTKEDNMLCFTVDGLHVCLVDANAAPLSERVFARLPPSACTLVYTRNSAAQQLLLENGFTVVNAEHTAFLKNHKSYREL</sequence>
<reference key="1">
    <citation type="journal article" date="1993" name="Virology">
        <title>A 25-kDa protein is associated with the envelopes of occluded baculovirus virions.</title>
        <authorList>
            <person name="Russell R.L.Q."/>
            <person name="Rohrmann G.F."/>
        </authorList>
    </citation>
    <scope>NUCLEOTIDE SEQUENCE [GENOMIC DNA]</scope>
</reference>
<reference key="2">
    <citation type="journal article" date="1997" name="Virology">
        <title>The sequence of the Orgyia pseudotsugata multinucleocapsid nuclear polyhedrosis virus genome.</title>
        <authorList>
            <person name="Ahrens C.H."/>
            <person name="Russell R.R."/>
            <person name="Funk C.J."/>
            <person name="Evans J."/>
            <person name="Harwood S."/>
            <person name="Rohrmann G.F."/>
        </authorList>
    </citation>
    <scope>NUCLEOTIDE SEQUENCE [LARGE SCALE GENOMIC DNA]</scope>
</reference>
<organism>
    <name type="scientific">Orgyia pseudotsugata multicapsid polyhedrosis virus</name>
    <name type="common">OpMNPV</name>
    <dbReference type="NCBI Taxonomy" id="262177"/>
    <lineage>
        <taxon>Viruses</taxon>
        <taxon>Viruses incertae sedis</taxon>
        <taxon>Naldaviricetes</taxon>
        <taxon>Lefavirales</taxon>
        <taxon>Baculoviridae</taxon>
        <taxon>Alphabaculovirus</taxon>
        <taxon>Alphabaculovirus orpseudotsugatae</taxon>
    </lineage>
</organism>
<gene>
    <name type="primary">P25</name>
    <name type="ORF">ORF95</name>
</gene>
<keyword id="KW-1048">Host nucleus</keyword>
<keyword id="KW-0472">Membrane</keyword>
<keyword id="KW-1185">Reference proteome</keyword>
<keyword id="KW-0946">Virion</keyword>
<name>VP25_NPVOP</name>
<evidence type="ECO:0000305" key="1"/>
<protein>
    <recommendedName>
        <fullName>Occlusion-derived virus envelope protein E25</fullName>
        <shortName>P25 protein</shortName>
    </recommendedName>
</protein>